<feature type="chain" id="PRO_1000068928" description="Galactose-6-phosphate isomerase subunit LacB">
    <location>
        <begin position="1"/>
        <end position="171"/>
    </location>
</feature>
<gene>
    <name evidence="1" type="primary">lacB</name>
    <name type="ordered locus">SPD_1052</name>
</gene>
<keyword id="KW-0413">Isomerase</keyword>
<keyword id="KW-0423">Lactose metabolism</keyword>
<keyword id="KW-1185">Reference proteome</keyword>
<comment type="catalytic activity">
    <reaction evidence="1">
        <text>aldehydo-D-galactose 6-phosphate = keto-D-tagatose 6-phosphate</text>
        <dbReference type="Rhea" id="RHEA:13033"/>
        <dbReference type="ChEBI" id="CHEBI:58255"/>
        <dbReference type="ChEBI" id="CHEBI:134283"/>
        <dbReference type="EC" id="5.3.1.26"/>
    </reaction>
</comment>
<comment type="pathway">
    <text evidence="1">Carbohydrate metabolism; D-galactose 6-phosphate degradation; D-tagatose 6-phosphate from D-galactose 6-phosphate: step 1/1.</text>
</comment>
<comment type="subunit">
    <text evidence="1">Heteromultimeric protein consisting of LacA and LacB.</text>
</comment>
<comment type="similarity">
    <text evidence="1">Belongs to the LacAB/RpiB family.</text>
</comment>
<dbReference type="EC" id="5.3.1.26" evidence="1"/>
<dbReference type="EMBL" id="CP000410">
    <property type="protein sequence ID" value="ABJ55425.1"/>
    <property type="molecule type" value="Genomic_DNA"/>
</dbReference>
<dbReference type="RefSeq" id="WP_001216910.1">
    <property type="nucleotide sequence ID" value="NZ_JAMLJR010000006.1"/>
</dbReference>
<dbReference type="SMR" id="Q04KC2"/>
<dbReference type="PaxDb" id="373153-SPD_1052"/>
<dbReference type="KEGG" id="spd:SPD_1052"/>
<dbReference type="eggNOG" id="COG0698">
    <property type="taxonomic scope" value="Bacteria"/>
</dbReference>
<dbReference type="HOGENOM" id="CLU_091396_2_0_9"/>
<dbReference type="BioCyc" id="SPNE373153:G1G6V-1143-MONOMER"/>
<dbReference type="UniPathway" id="UPA00702">
    <property type="reaction ID" value="UER00714"/>
</dbReference>
<dbReference type="Proteomes" id="UP000001452">
    <property type="component" value="Chromosome"/>
</dbReference>
<dbReference type="GO" id="GO:0050044">
    <property type="term" value="F:galactose-6-phosphate isomerase activity"/>
    <property type="evidence" value="ECO:0007669"/>
    <property type="project" value="UniProtKB-UniRule"/>
</dbReference>
<dbReference type="GO" id="GO:0004751">
    <property type="term" value="F:ribose-5-phosphate isomerase activity"/>
    <property type="evidence" value="ECO:0007669"/>
    <property type="project" value="TreeGrafter"/>
</dbReference>
<dbReference type="GO" id="GO:0019316">
    <property type="term" value="P:D-allose catabolic process"/>
    <property type="evidence" value="ECO:0007669"/>
    <property type="project" value="TreeGrafter"/>
</dbReference>
<dbReference type="GO" id="GO:0019388">
    <property type="term" value="P:galactose catabolic process"/>
    <property type="evidence" value="ECO:0007669"/>
    <property type="project" value="UniProtKB-UniPathway"/>
</dbReference>
<dbReference type="GO" id="GO:0019512">
    <property type="term" value="P:lactose catabolic process via tagatose-6-phosphate"/>
    <property type="evidence" value="ECO:0007669"/>
    <property type="project" value="UniProtKB-UniRule"/>
</dbReference>
<dbReference type="GO" id="GO:0009052">
    <property type="term" value="P:pentose-phosphate shunt, non-oxidative branch"/>
    <property type="evidence" value="ECO:0007669"/>
    <property type="project" value="TreeGrafter"/>
</dbReference>
<dbReference type="Gene3D" id="3.40.1400.10">
    <property type="entry name" value="Sugar-phosphate isomerase, RpiB/LacA/LacB"/>
    <property type="match status" value="1"/>
</dbReference>
<dbReference type="HAMAP" id="MF_01556">
    <property type="entry name" value="LacB"/>
    <property type="match status" value="1"/>
</dbReference>
<dbReference type="InterPro" id="IPR004784">
    <property type="entry name" value="LacB"/>
</dbReference>
<dbReference type="InterPro" id="IPR003500">
    <property type="entry name" value="RpiB_LacA_LacB"/>
</dbReference>
<dbReference type="InterPro" id="IPR036569">
    <property type="entry name" value="RpiB_LacA_LacB_sf"/>
</dbReference>
<dbReference type="NCBIfam" id="TIGR01119">
    <property type="entry name" value="lacB"/>
    <property type="match status" value="1"/>
</dbReference>
<dbReference type="NCBIfam" id="NF004051">
    <property type="entry name" value="PRK05571.1"/>
    <property type="match status" value="1"/>
</dbReference>
<dbReference type="NCBIfam" id="NF006381">
    <property type="entry name" value="PRK08622.1"/>
    <property type="match status" value="1"/>
</dbReference>
<dbReference type="NCBIfam" id="NF009258">
    <property type="entry name" value="PRK12615.1"/>
    <property type="match status" value="1"/>
</dbReference>
<dbReference type="NCBIfam" id="TIGR00689">
    <property type="entry name" value="rpiB_lacA_lacB"/>
    <property type="match status" value="1"/>
</dbReference>
<dbReference type="PANTHER" id="PTHR30345:SF0">
    <property type="entry name" value="DNA DAMAGE-REPAIR_TOLERATION PROTEIN DRT102"/>
    <property type="match status" value="1"/>
</dbReference>
<dbReference type="PANTHER" id="PTHR30345">
    <property type="entry name" value="RIBOSE-5-PHOSPHATE ISOMERASE B"/>
    <property type="match status" value="1"/>
</dbReference>
<dbReference type="Pfam" id="PF02502">
    <property type="entry name" value="LacAB_rpiB"/>
    <property type="match status" value="1"/>
</dbReference>
<dbReference type="PIRSF" id="PIRSF005384">
    <property type="entry name" value="RpiB_LacA_B"/>
    <property type="match status" value="1"/>
</dbReference>
<dbReference type="SUPFAM" id="SSF89623">
    <property type="entry name" value="Ribose/Galactose isomerase RpiB/AlsB"/>
    <property type="match status" value="1"/>
</dbReference>
<protein>
    <recommendedName>
        <fullName evidence="1">Galactose-6-phosphate isomerase subunit LacB</fullName>
        <ecNumber evidence="1">5.3.1.26</ecNumber>
    </recommendedName>
</protein>
<accession>Q04KC2</accession>
<evidence type="ECO:0000255" key="1">
    <source>
        <dbReference type="HAMAP-Rule" id="MF_01556"/>
    </source>
</evidence>
<organism>
    <name type="scientific">Streptococcus pneumoniae serotype 2 (strain D39 / NCTC 7466)</name>
    <dbReference type="NCBI Taxonomy" id="373153"/>
    <lineage>
        <taxon>Bacteria</taxon>
        <taxon>Bacillati</taxon>
        <taxon>Bacillota</taxon>
        <taxon>Bacilli</taxon>
        <taxon>Lactobacillales</taxon>
        <taxon>Streptococcaceae</taxon>
        <taxon>Streptococcus</taxon>
    </lineage>
</organism>
<sequence length="171" mass="18958">MRIAIGCDHIVTDEKMAVSEFLKSKGYEVIDFGTYDHTRTHYPIFGKKVGEAVTSGQADLGVCICGTGVGINNAVNKVPGVRSALVRDMTTALYAKEQLNANVIGFGGKITGELLMCDIIEAFIHAEYKPSEENKKLIAKIEHLESHNAQQTDANFFTEFLEKWDRGEYHD</sequence>
<name>LACB_STRP2</name>
<reference key="1">
    <citation type="journal article" date="2007" name="J. Bacteriol.">
        <title>Genome sequence of Avery's virulent serotype 2 strain D39 of Streptococcus pneumoniae and comparison with that of unencapsulated laboratory strain R6.</title>
        <authorList>
            <person name="Lanie J.A."/>
            <person name="Ng W.-L."/>
            <person name="Kazmierczak K.M."/>
            <person name="Andrzejewski T.M."/>
            <person name="Davidsen T.M."/>
            <person name="Wayne K.J."/>
            <person name="Tettelin H."/>
            <person name="Glass J.I."/>
            <person name="Winkler M.E."/>
        </authorList>
    </citation>
    <scope>NUCLEOTIDE SEQUENCE [LARGE SCALE GENOMIC DNA]</scope>
    <source>
        <strain>D39 / NCTC 7466</strain>
    </source>
</reference>
<proteinExistence type="inferred from homology"/>